<protein>
    <recommendedName>
        <fullName>Biopolymer transport protein ExbD</fullName>
    </recommendedName>
</protein>
<dbReference type="EMBL" id="X70139">
    <property type="protein sequence ID" value="CAA49715.1"/>
    <property type="molecule type" value="Genomic_DNA"/>
</dbReference>
<dbReference type="PIR" id="S28443">
    <property type="entry name" value="S28443"/>
</dbReference>
<dbReference type="SMR" id="Q05606"/>
<dbReference type="eggNOG" id="COG0848">
    <property type="taxonomic scope" value="Bacteria"/>
</dbReference>
<dbReference type="GO" id="GO:0005886">
    <property type="term" value="C:plasma membrane"/>
    <property type="evidence" value="ECO:0007669"/>
    <property type="project" value="UniProtKB-SubCell"/>
</dbReference>
<dbReference type="GO" id="GO:0022857">
    <property type="term" value="F:transmembrane transporter activity"/>
    <property type="evidence" value="ECO:0007669"/>
    <property type="project" value="InterPro"/>
</dbReference>
<dbReference type="GO" id="GO:0015031">
    <property type="term" value="P:protein transport"/>
    <property type="evidence" value="ECO:0007669"/>
    <property type="project" value="UniProtKB-KW"/>
</dbReference>
<dbReference type="Gene3D" id="3.30.420.270">
    <property type="match status" value="1"/>
</dbReference>
<dbReference type="InterPro" id="IPR003400">
    <property type="entry name" value="ExbD"/>
</dbReference>
<dbReference type="InterPro" id="IPR014170">
    <property type="entry name" value="TonB_ExbD_1"/>
</dbReference>
<dbReference type="NCBIfam" id="TIGR02803">
    <property type="entry name" value="ExbD_1"/>
    <property type="match status" value="1"/>
</dbReference>
<dbReference type="NCBIfam" id="NF008429">
    <property type="entry name" value="PRK11267.1"/>
    <property type="match status" value="1"/>
</dbReference>
<dbReference type="PANTHER" id="PTHR30558:SF9">
    <property type="entry name" value="BIOPOLYMER TRANSPORT PROTEIN EXBD"/>
    <property type="match status" value="1"/>
</dbReference>
<dbReference type="PANTHER" id="PTHR30558">
    <property type="entry name" value="EXBD MEMBRANE COMPONENT OF PMF-DRIVEN MACROMOLECULE IMPORT SYSTEM"/>
    <property type="match status" value="1"/>
</dbReference>
<dbReference type="Pfam" id="PF02472">
    <property type="entry name" value="ExbD"/>
    <property type="match status" value="1"/>
</dbReference>
<keyword id="KW-0997">Cell inner membrane</keyword>
<keyword id="KW-1003">Cell membrane</keyword>
<keyword id="KW-0472">Membrane</keyword>
<keyword id="KW-0653">Protein transport</keyword>
<keyword id="KW-0812">Transmembrane</keyword>
<keyword id="KW-1133">Transmembrane helix</keyword>
<keyword id="KW-0813">Transport</keyword>
<evidence type="ECO:0000255" key="1"/>
<evidence type="ECO:0000305" key="2"/>
<gene>
    <name type="primary">exbD</name>
</gene>
<name>EXBD_PSEPU</name>
<comment type="function">
    <text>Involved in the TonB-dependent energy-dependent transport of various receptor-bound substrates.</text>
</comment>
<comment type="subunit">
    <text>The accessory proteins ExbB and ExbD seem to form a complex with TonB.</text>
</comment>
<comment type="subcellular location">
    <subcellularLocation>
        <location evidence="2">Cell inner membrane</location>
        <topology evidence="2">Single-pass type II membrane protein</topology>
    </subcellularLocation>
</comment>
<comment type="similarity">
    <text evidence="2">Belongs to the ExbD/TolR family.</text>
</comment>
<proteinExistence type="inferred from homology"/>
<reference key="1">
    <citation type="journal article" date="1993" name="Mol. Microbiol.">
        <title>Identification and characterization of the exbB, exbD and tonB genes of Pseudomonas putida WCS358: their involvement in ferric-pseudobactin transport.</title>
        <authorList>
            <person name="Bitter W."/>
            <person name="Tommassen J."/>
            <person name="Weisbeek P.J."/>
        </authorList>
    </citation>
    <scope>NUCLEOTIDE SEQUENCE [GENOMIC DNA]</scope>
    <source>
        <strain>WCS358</strain>
    </source>
</reference>
<sequence length="142" mass="15225">MGLHLNEGGDDLAENHEINVTPFIDVMLVLLIIFMVAAPLATVDIKVDLPASTAKPAPRPEKPVFVSVKADQKLYVGDDQVPAPAQLGAMLDAKTKGDKETTIFFQADKGVDYGDLMEVMNNMRAAGYLKVGLVGLETAAKK</sequence>
<organism>
    <name type="scientific">Pseudomonas putida</name>
    <name type="common">Arthrobacter siderocapsulatus</name>
    <dbReference type="NCBI Taxonomy" id="303"/>
    <lineage>
        <taxon>Bacteria</taxon>
        <taxon>Pseudomonadati</taxon>
        <taxon>Pseudomonadota</taxon>
        <taxon>Gammaproteobacteria</taxon>
        <taxon>Pseudomonadales</taxon>
        <taxon>Pseudomonadaceae</taxon>
        <taxon>Pseudomonas</taxon>
    </lineage>
</organism>
<accession>Q05606</accession>
<feature type="chain" id="PRO_0000129129" description="Biopolymer transport protein ExbD">
    <location>
        <begin position="1"/>
        <end position="142"/>
    </location>
</feature>
<feature type="topological domain" description="Cytoplasmic" evidence="1">
    <location>
        <begin position="1"/>
        <end position="22"/>
    </location>
</feature>
<feature type="transmembrane region" description="Helical" evidence="1">
    <location>
        <begin position="23"/>
        <end position="43"/>
    </location>
</feature>
<feature type="topological domain" description="Periplasmic" evidence="1">
    <location>
        <begin position="44"/>
        <end position="142"/>
    </location>
</feature>